<name>FENR_RICRS</name>
<evidence type="ECO:0000255" key="1">
    <source>
        <dbReference type="HAMAP-Rule" id="MF_01685"/>
    </source>
</evidence>
<accession>A8GS72</accession>
<proteinExistence type="inferred from homology"/>
<comment type="catalytic activity">
    <reaction evidence="1">
        <text>2 reduced [2Fe-2S]-[ferredoxin] + NADP(+) + H(+) = 2 oxidized [2Fe-2S]-[ferredoxin] + NADPH</text>
        <dbReference type="Rhea" id="RHEA:20125"/>
        <dbReference type="Rhea" id="RHEA-COMP:10000"/>
        <dbReference type="Rhea" id="RHEA-COMP:10001"/>
        <dbReference type="ChEBI" id="CHEBI:15378"/>
        <dbReference type="ChEBI" id="CHEBI:33737"/>
        <dbReference type="ChEBI" id="CHEBI:33738"/>
        <dbReference type="ChEBI" id="CHEBI:57783"/>
        <dbReference type="ChEBI" id="CHEBI:58349"/>
        <dbReference type="EC" id="1.18.1.2"/>
    </reaction>
</comment>
<comment type="cofactor">
    <cofactor evidence="1">
        <name>FAD</name>
        <dbReference type="ChEBI" id="CHEBI:57692"/>
    </cofactor>
    <text evidence="1">Binds 1 FAD per subunit.</text>
</comment>
<comment type="subunit">
    <text evidence="1">Homodimer.</text>
</comment>
<comment type="similarity">
    <text evidence="1">Belongs to the ferredoxin--NADP reductase type 2 family.</text>
</comment>
<gene>
    <name type="ordered locus">A1G_03605</name>
</gene>
<reference key="1">
    <citation type="submission" date="2007-09" db="EMBL/GenBank/DDBJ databases">
        <title>Complete genome sequence of Rickettsia rickettsii.</title>
        <authorList>
            <person name="Madan A."/>
            <person name="Fahey J."/>
            <person name="Helton E."/>
            <person name="Ketteman M."/>
            <person name="Madan A."/>
            <person name="Rodrigues S."/>
            <person name="Sanchez A."/>
            <person name="Dasch G."/>
            <person name="Eremeeva M."/>
        </authorList>
    </citation>
    <scope>NUCLEOTIDE SEQUENCE [LARGE SCALE GENOMIC DNA]</scope>
    <source>
        <strain>Sheila Smith</strain>
    </source>
</reference>
<dbReference type="EC" id="1.18.1.2" evidence="1"/>
<dbReference type="EMBL" id="CP000848">
    <property type="protein sequence ID" value="ABV76247.1"/>
    <property type="molecule type" value="Genomic_DNA"/>
</dbReference>
<dbReference type="RefSeq" id="WP_012150831.1">
    <property type="nucleotide sequence ID" value="NZ_CP121767.1"/>
</dbReference>
<dbReference type="SMR" id="A8GS72"/>
<dbReference type="KEGG" id="rri:A1G_03605"/>
<dbReference type="HOGENOM" id="CLU_031864_5_5_5"/>
<dbReference type="Proteomes" id="UP000006832">
    <property type="component" value="Chromosome"/>
</dbReference>
<dbReference type="GO" id="GO:0004324">
    <property type="term" value="F:ferredoxin-NADP+ reductase activity"/>
    <property type="evidence" value="ECO:0007669"/>
    <property type="project" value="UniProtKB-UniRule"/>
</dbReference>
<dbReference type="GO" id="GO:0050660">
    <property type="term" value="F:flavin adenine dinucleotide binding"/>
    <property type="evidence" value="ECO:0007669"/>
    <property type="project" value="UniProtKB-UniRule"/>
</dbReference>
<dbReference type="GO" id="GO:0050661">
    <property type="term" value="F:NADP binding"/>
    <property type="evidence" value="ECO:0007669"/>
    <property type="project" value="UniProtKB-UniRule"/>
</dbReference>
<dbReference type="Gene3D" id="3.50.50.60">
    <property type="entry name" value="FAD/NAD(P)-binding domain"/>
    <property type="match status" value="2"/>
</dbReference>
<dbReference type="HAMAP" id="MF_01685">
    <property type="entry name" value="FENR2"/>
    <property type="match status" value="1"/>
</dbReference>
<dbReference type="InterPro" id="IPR036188">
    <property type="entry name" value="FAD/NAD-bd_sf"/>
</dbReference>
<dbReference type="InterPro" id="IPR023753">
    <property type="entry name" value="FAD/NAD-binding_dom"/>
</dbReference>
<dbReference type="InterPro" id="IPR022890">
    <property type="entry name" value="Fd--NADP_Rdtase_type_2"/>
</dbReference>
<dbReference type="InterPro" id="IPR050097">
    <property type="entry name" value="Ferredoxin-NADP_redctase_2"/>
</dbReference>
<dbReference type="PANTHER" id="PTHR48105">
    <property type="entry name" value="THIOREDOXIN REDUCTASE 1-RELATED-RELATED"/>
    <property type="match status" value="1"/>
</dbReference>
<dbReference type="Pfam" id="PF07992">
    <property type="entry name" value="Pyr_redox_2"/>
    <property type="match status" value="1"/>
</dbReference>
<dbReference type="PRINTS" id="PR00368">
    <property type="entry name" value="FADPNR"/>
</dbReference>
<dbReference type="PRINTS" id="PR00469">
    <property type="entry name" value="PNDRDTASEII"/>
</dbReference>
<dbReference type="SUPFAM" id="SSF51905">
    <property type="entry name" value="FAD/NAD(P)-binding domain"/>
    <property type="match status" value="1"/>
</dbReference>
<feature type="chain" id="PRO_0000364929" description="Ferredoxin--NADP reductase">
    <location>
        <begin position="1"/>
        <end position="340"/>
    </location>
</feature>
<feature type="binding site" evidence="1">
    <location>
        <position position="33"/>
    </location>
    <ligand>
        <name>FAD</name>
        <dbReference type="ChEBI" id="CHEBI:57692"/>
    </ligand>
</feature>
<feature type="binding site" evidence="1">
    <location>
        <position position="41"/>
    </location>
    <ligand>
        <name>FAD</name>
        <dbReference type="ChEBI" id="CHEBI:57692"/>
    </ligand>
</feature>
<feature type="binding site" evidence="1">
    <location>
        <position position="46"/>
    </location>
    <ligand>
        <name>FAD</name>
        <dbReference type="ChEBI" id="CHEBI:57692"/>
    </ligand>
</feature>
<feature type="binding site" evidence="1">
    <location>
        <position position="86"/>
    </location>
    <ligand>
        <name>FAD</name>
        <dbReference type="ChEBI" id="CHEBI:57692"/>
    </ligand>
</feature>
<feature type="binding site" evidence="1">
    <location>
        <position position="120"/>
    </location>
    <ligand>
        <name>FAD</name>
        <dbReference type="ChEBI" id="CHEBI:57692"/>
    </ligand>
</feature>
<feature type="binding site" evidence="1">
    <location>
        <position position="286"/>
    </location>
    <ligand>
        <name>FAD</name>
        <dbReference type="ChEBI" id="CHEBI:57692"/>
    </ligand>
</feature>
<feature type="binding site" evidence="1">
    <location>
        <position position="327"/>
    </location>
    <ligand>
        <name>FAD</name>
        <dbReference type="ChEBI" id="CHEBI:57692"/>
    </ligand>
</feature>
<keyword id="KW-0274">FAD</keyword>
<keyword id="KW-0285">Flavoprotein</keyword>
<keyword id="KW-0521">NADP</keyword>
<keyword id="KW-0560">Oxidoreductase</keyword>
<sequence length="340" mass="37434">MHNTDVVIIGAGPVGLFAVFQAGMLGMKCHVIDAQEVIGGQCITLYPEKPIYDIPAYPKIVAEELIKQLALQAAPFNPIYHLNQQAIELNKQDDFFEIKTSKNTLIKSKVIIIAAGAGSFGPNKPPLANIEDFESKSVFYFINDKSKFAGKNIVIAGGGDSAVDWAISLSDIANKIYLVHRRDKFTAAPESVRQLRHIAETDKIELITGYQLNALDGNNSELQSVIVKDLQNNTRKLDANILLPFFGLKQDLGSLANWGLNVKLHHIEVDSSYYQTNIEGIYAIGDIAHYVGKLKLILTGFAEAASSLHHAYSRVFDGKALHFEYSTTKNTGKRSKSVTK</sequence>
<organism>
    <name type="scientific">Rickettsia rickettsii (strain Sheila Smith)</name>
    <dbReference type="NCBI Taxonomy" id="392021"/>
    <lineage>
        <taxon>Bacteria</taxon>
        <taxon>Pseudomonadati</taxon>
        <taxon>Pseudomonadota</taxon>
        <taxon>Alphaproteobacteria</taxon>
        <taxon>Rickettsiales</taxon>
        <taxon>Rickettsiaceae</taxon>
        <taxon>Rickettsieae</taxon>
        <taxon>Rickettsia</taxon>
        <taxon>spotted fever group</taxon>
    </lineage>
</organism>
<protein>
    <recommendedName>
        <fullName evidence="1">Ferredoxin--NADP reductase</fullName>
        <shortName evidence="1">FNR</shortName>
        <shortName evidence="1">Fd-NADP(+) reductase</shortName>
        <ecNumber evidence="1">1.18.1.2</ecNumber>
    </recommendedName>
</protein>